<dbReference type="EMBL" id="CP000454">
    <property type="protein sequence ID" value="ABK04348.1"/>
    <property type="molecule type" value="Genomic_DNA"/>
</dbReference>
<dbReference type="RefSeq" id="WP_011692804.1">
    <property type="nucleotide sequence ID" value="NC_008541.1"/>
</dbReference>
<dbReference type="SMR" id="A0JZ78"/>
<dbReference type="STRING" id="290399.Arth_2969"/>
<dbReference type="KEGG" id="art:Arth_2969"/>
<dbReference type="eggNOG" id="COG0092">
    <property type="taxonomic scope" value="Bacteria"/>
</dbReference>
<dbReference type="HOGENOM" id="CLU_058591_0_2_11"/>
<dbReference type="OrthoDB" id="9806396at2"/>
<dbReference type="Proteomes" id="UP000000754">
    <property type="component" value="Chromosome"/>
</dbReference>
<dbReference type="GO" id="GO:0022627">
    <property type="term" value="C:cytosolic small ribosomal subunit"/>
    <property type="evidence" value="ECO:0007669"/>
    <property type="project" value="TreeGrafter"/>
</dbReference>
<dbReference type="GO" id="GO:0003729">
    <property type="term" value="F:mRNA binding"/>
    <property type="evidence" value="ECO:0007669"/>
    <property type="project" value="UniProtKB-UniRule"/>
</dbReference>
<dbReference type="GO" id="GO:0019843">
    <property type="term" value="F:rRNA binding"/>
    <property type="evidence" value="ECO:0007669"/>
    <property type="project" value="UniProtKB-UniRule"/>
</dbReference>
<dbReference type="GO" id="GO:0003735">
    <property type="term" value="F:structural constituent of ribosome"/>
    <property type="evidence" value="ECO:0007669"/>
    <property type="project" value="InterPro"/>
</dbReference>
<dbReference type="GO" id="GO:0006412">
    <property type="term" value="P:translation"/>
    <property type="evidence" value="ECO:0007669"/>
    <property type="project" value="UniProtKB-UniRule"/>
</dbReference>
<dbReference type="CDD" id="cd02412">
    <property type="entry name" value="KH-II_30S_S3"/>
    <property type="match status" value="1"/>
</dbReference>
<dbReference type="FunFam" id="3.30.1140.32:FF:000002">
    <property type="entry name" value="30S ribosomal protein S3"/>
    <property type="match status" value="1"/>
</dbReference>
<dbReference type="FunFam" id="3.30.300.20:FF:000001">
    <property type="entry name" value="30S ribosomal protein S3"/>
    <property type="match status" value="1"/>
</dbReference>
<dbReference type="Gene3D" id="3.30.300.20">
    <property type="match status" value="1"/>
</dbReference>
<dbReference type="Gene3D" id="3.30.1140.32">
    <property type="entry name" value="Ribosomal protein S3, C-terminal domain"/>
    <property type="match status" value="1"/>
</dbReference>
<dbReference type="HAMAP" id="MF_01309_B">
    <property type="entry name" value="Ribosomal_uS3_B"/>
    <property type="match status" value="1"/>
</dbReference>
<dbReference type="InterPro" id="IPR004087">
    <property type="entry name" value="KH_dom"/>
</dbReference>
<dbReference type="InterPro" id="IPR015946">
    <property type="entry name" value="KH_dom-like_a/b"/>
</dbReference>
<dbReference type="InterPro" id="IPR004044">
    <property type="entry name" value="KH_dom_type_2"/>
</dbReference>
<dbReference type="InterPro" id="IPR009019">
    <property type="entry name" value="KH_sf_prok-type"/>
</dbReference>
<dbReference type="InterPro" id="IPR036419">
    <property type="entry name" value="Ribosomal_S3_C_sf"/>
</dbReference>
<dbReference type="InterPro" id="IPR005704">
    <property type="entry name" value="Ribosomal_uS3_bac-typ"/>
</dbReference>
<dbReference type="InterPro" id="IPR001351">
    <property type="entry name" value="Ribosomal_uS3_C"/>
</dbReference>
<dbReference type="InterPro" id="IPR018280">
    <property type="entry name" value="Ribosomal_uS3_CS"/>
</dbReference>
<dbReference type="NCBIfam" id="TIGR01009">
    <property type="entry name" value="rpsC_bact"/>
    <property type="match status" value="1"/>
</dbReference>
<dbReference type="PANTHER" id="PTHR11760">
    <property type="entry name" value="30S/40S RIBOSOMAL PROTEIN S3"/>
    <property type="match status" value="1"/>
</dbReference>
<dbReference type="PANTHER" id="PTHR11760:SF19">
    <property type="entry name" value="SMALL RIBOSOMAL SUBUNIT PROTEIN US3C"/>
    <property type="match status" value="1"/>
</dbReference>
<dbReference type="Pfam" id="PF07650">
    <property type="entry name" value="KH_2"/>
    <property type="match status" value="1"/>
</dbReference>
<dbReference type="Pfam" id="PF00189">
    <property type="entry name" value="Ribosomal_S3_C"/>
    <property type="match status" value="1"/>
</dbReference>
<dbReference type="SMART" id="SM00322">
    <property type="entry name" value="KH"/>
    <property type="match status" value="1"/>
</dbReference>
<dbReference type="SUPFAM" id="SSF54814">
    <property type="entry name" value="Prokaryotic type KH domain (KH-domain type II)"/>
    <property type="match status" value="1"/>
</dbReference>
<dbReference type="SUPFAM" id="SSF54821">
    <property type="entry name" value="Ribosomal protein S3 C-terminal domain"/>
    <property type="match status" value="1"/>
</dbReference>
<dbReference type="PROSITE" id="PS50823">
    <property type="entry name" value="KH_TYPE_2"/>
    <property type="match status" value="1"/>
</dbReference>
<dbReference type="PROSITE" id="PS00548">
    <property type="entry name" value="RIBOSOMAL_S3"/>
    <property type="match status" value="1"/>
</dbReference>
<feature type="chain" id="PRO_0000293751" description="Small ribosomal subunit protein uS3">
    <location>
        <begin position="1"/>
        <end position="277"/>
    </location>
</feature>
<feature type="domain" description="KH type-2" evidence="1">
    <location>
        <begin position="43"/>
        <end position="111"/>
    </location>
</feature>
<feature type="region of interest" description="Disordered" evidence="2">
    <location>
        <begin position="218"/>
        <end position="277"/>
    </location>
</feature>
<feature type="compositionally biased region" description="Low complexity" evidence="2">
    <location>
        <begin position="218"/>
        <end position="228"/>
    </location>
</feature>
<feature type="compositionally biased region" description="Basic and acidic residues" evidence="2">
    <location>
        <begin position="229"/>
        <end position="244"/>
    </location>
</feature>
<feature type="compositionally biased region" description="Low complexity" evidence="2">
    <location>
        <begin position="254"/>
        <end position="277"/>
    </location>
</feature>
<gene>
    <name evidence="1" type="primary">rpsC</name>
    <name type="ordered locus">Arth_2969</name>
</gene>
<evidence type="ECO:0000255" key="1">
    <source>
        <dbReference type="HAMAP-Rule" id="MF_01309"/>
    </source>
</evidence>
<evidence type="ECO:0000256" key="2">
    <source>
        <dbReference type="SAM" id="MobiDB-lite"/>
    </source>
</evidence>
<evidence type="ECO:0000305" key="3"/>
<protein>
    <recommendedName>
        <fullName evidence="1">Small ribosomal subunit protein uS3</fullName>
    </recommendedName>
    <alternativeName>
        <fullName evidence="3">30S ribosomal protein S3</fullName>
    </alternativeName>
</protein>
<name>RS3_ARTS2</name>
<sequence length="277" mass="30296">MGQKVNPHGFRLGITTDHVSHWFADSTKAGQRYKDFVREDIRIRQLMSTGMERAGIAKVEIERTRDRVRVDIHTARPGIVIGRRGAEADRIRGELEKLTGKQVQLNILEVKNPEMEAQLVAQGVAEQLTSRVAFRRAMKKAMQSAQRAGAKGIRIACSGRLGGAEMSRSEFYREGRVPLHTLRANIDYGFYEAKTTFGRIGVKVWIYKGDVTSKELAQQAAAAPSRGRGASDRPGRPGGADRGDRRRRTDRPAAEAAPAAEAPAVEAAAPAVEGGQA</sequence>
<keyword id="KW-1185">Reference proteome</keyword>
<keyword id="KW-0687">Ribonucleoprotein</keyword>
<keyword id="KW-0689">Ribosomal protein</keyword>
<keyword id="KW-0694">RNA-binding</keyword>
<keyword id="KW-0699">rRNA-binding</keyword>
<organism>
    <name type="scientific">Arthrobacter sp. (strain FB24)</name>
    <dbReference type="NCBI Taxonomy" id="290399"/>
    <lineage>
        <taxon>Bacteria</taxon>
        <taxon>Bacillati</taxon>
        <taxon>Actinomycetota</taxon>
        <taxon>Actinomycetes</taxon>
        <taxon>Micrococcales</taxon>
        <taxon>Micrococcaceae</taxon>
        <taxon>Arthrobacter</taxon>
    </lineage>
</organism>
<comment type="function">
    <text evidence="1">Binds the lower part of the 30S subunit head. Binds mRNA in the 70S ribosome, positioning it for translation.</text>
</comment>
<comment type="subunit">
    <text evidence="1">Part of the 30S ribosomal subunit. Forms a tight complex with proteins S10 and S14.</text>
</comment>
<comment type="similarity">
    <text evidence="1">Belongs to the universal ribosomal protein uS3 family.</text>
</comment>
<reference key="1">
    <citation type="journal article" date="2013" name="Stand. Genomic Sci.">
        <title>Complete genome sequence of Arthrobacter sp. strain FB24.</title>
        <authorList>
            <person name="Nakatsu C.H."/>
            <person name="Barabote R."/>
            <person name="Thompson S."/>
            <person name="Bruce D."/>
            <person name="Detter C."/>
            <person name="Brettin T."/>
            <person name="Han C."/>
            <person name="Beasley F."/>
            <person name="Chen W."/>
            <person name="Konopka A."/>
            <person name="Xie G."/>
        </authorList>
    </citation>
    <scope>NUCLEOTIDE SEQUENCE [LARGE SCALE GENOMIC DNA]</scope>
    <source>
        <strain>FB24</strain>
    </source>
</reference>
<proteinExistence type="inferred from homology"/>
<accession>A0JZ78</accession>